<name>YN146_YEAST</name>
<dbReference type="EMBL" id="Z71422">
    <property type="status" value="NOT_ANNOTATED_CDS"/>
    <property type="molecule type" value="Genomic_DNA"/>
</dbReference>
<dbReference type="EMBL" id="BK006947">
    <property type="protein sequence ID" value="DAA10402.1"/>
    <property type="molecule type" value="Genomic_DNA"/>
</dbReference>
<dbReference type="RefSeq" id="NP_878152.1">
    <property type="nucleotide sequence ID" value="NM_001184663.1"/>
</dbReference>
<dbReference type="SMR" id="Q3E7Z1"/>
<dbReference type="BioGRID" id="37052">
    <property type="interactions" value="37"/>
</dbReference>
<dbReference type="FunCoup" id="Q3E7Z1">
    <property type="interactions" value="32"/>
</dbReference>
<dbReference type="PaxDb" id="4932-YNL146C-A"/>
<dbReference type="EnsemblFungi" id="YNL146C-A_mRNA">
    <property type="protein sequence ID" value="YNL146C-A"/>
    <property type="gene ID" value="YNL146C-A"/>
</dbReference>
<dbReference type="GeneID" id="1466510"/>
<dbReference type="KEGG" id="sce:YNL146C-A"/>
<dbReference type="AGR" id="SGD:S000028851"/>
<dbReference type="SGD" id="S000028851">
    <property type="gene designation" value="YNL146C-A"/>
</dbReference>
<dbReference type="VEuPathDB" id="FungiDB:YNL146C-A"/>
<dbReference type="HOGENOM" id="CLU_2868876_0_0_1"/>
<dbReference type="InParanoid" id="Q3E7Z1"/>
<dbReference type="OrthoDB" id="10270614at2759"/>
<dbReference type="BioCyc" id="YEAST:G3O-33415-MONOMER"/>
<dbReference type="BioGRID-ORCS" id="1466510">
    <property type="hits" value="1 hit in 10 CRISPR screens"/>
</dbReference>
<dbReference type="PRO" id="PR:Q3E7Z1"/>
<dbReference type="Proteomes" id="UP000002311">
    <property type="component" value="Chromosome XIV"/>
</dbReference>
<dbReference type="RNAct" id="Q3E7Z1">
    <property type="molecule type" value="protein"/>
</dbReference>
<accession>Q3E7Z1</accession>
<accession>D6W136</accession>
<sequence>MISVCFVFPHSLALDFKSRCKKNRTKLCSAYYVSQVLRICKEMPYRDLILFSTVRKGVYMRLYY</sequence>
<keyword id="KW-1185">Reference proteome</keyword>
<protein>
    <recommendedName>
        <fullName>Uncharacterized protein YNL146C-A</fullName>
    </recommendedName>
</protein>
<reference key="1">
    <citation type="journal article" date="1997" name="Nature">
        <title>The nucleotide sequence of Saccharomyces cerevisiae chromosome XIV and its evolutionary implications.</title>
        <authorList>
            <person name="Philippsen P."/>
            <person name="Kleine K."/>
            <person name="Poehlmann R."/>
            <person name="Duesterhoeft A."/>
            <person name="Hamberg K."/>
            <person name="Hegemann J.H."/>
            <person name="Obermaier B."/>
            <person name="Urrestarazu L.A."/>
            <person name="Aert R."/>
            <person name="Albermann K."/>
            <person name="Altmann R."/>
            <person name="Andre B."/>
            <person name="Baladron V."/>
            <person name="Ballesta J.P.G."/>
            <person name="Becam A.-M."/>
            <person name="Beinhauer J.D."/>
            <person name="Boskovic J."/>
            <person name="Buitrago M.J."/>
            <person name="Bussereau F."/>
            <person name="Coster F."/>
            <person name="Crouzet M."/>
            <person name="D'Angelo M."/>
            <person name="Dal Pero F."/>
            <person name="De Antoni A."/>
            <person name="del Rey F."/>
            <person name="Doignon F."/>
            <person name="Domdey H."/>
            <person name="Dubois E."/>
            <person name="Fiedler T.A."/>
            <person name="Fleig U."/>
            <person name="Floeth M."/>
            <person name="Fritz C."/>
            <person name="Gaillardin C."/>
            <person name="Garcia-Cantalejo J.M."/>
            <person name="Glansdorff N."/>
            <person name="Goffeau A."/>
            <person name="Gueldener U."/>
            <person name="Herbert C.J."/>
            <person name="Heumann K."/>
            <person name="Heuss-Neitzel D."/>
            <person name="Hilbert H."/>
            <person name="Hinni K."/>
            <person name="Iraqui Houssaini I."/>
            <person name="Jacquet M."/>
            <person name="Jimenez A."/>
            <person name="Jonniaux J.-L."/>
            <person name="Karpfinger-Hartl L."/>
            <person name="Lanfranchi G."/>
            <person name="Lepingle A."/>
            <person name="Levesque H."/>
            <person name="Lyck R."/>
            <person name="Maftahi M."/>
            <person name="Mallet L."/>
            <person name="Maurer C.T.C."/>
            <person name="Messenguy F."/>
            <person name="Mewes H.-W."/>
            <person name="Moestl D."/>
            <person name="Nasr F."/>
            <person name="Nicaud J.-M."/>
            <person name="Niedenthal R.K."/>
            <person name="Pandolfo D."/>
            <person name="Pierard A."/>
            <person name="Piravandi E."/>
            <person name="Planta R.J."/>
            <person name="Pohl T.M."/>
            <person name="Purnelle B."/>
            <person name="Rebischung C."/>
            <person name="Remacha M.A."/>
            <person name="Revuelta J.L."/>
            <person name="Rinke M."/>
            <person name="Saiz J.E."/>
            <person name="Sartorello F."/>
            <person name="Scherens B."/>
            <person name="Sen-Gupta M."/>
            <person name="Soler-Mira A."/>
            <person name="Urbanus J.H.M."/>
            <person name="Valle G."/>
            <person name="Van Dyck L."/>
            <person name="Verhasselt P."/>
            <person name="Vierendeels F."/>
            <person name="Vissers S."/>
            <person name="Voet M."/>
            <person name="Volckaert G."/>
            <person name="Wach A."/>
            <person name="Wambutt R."/>
            <person name="Wedler H."/>
            <person name="Zollner A."/>
            <person name="Hani J."/>
        </authorList>
    </citation>
    <scope>NUCLEOTIDE SEQUENCE [LARGE SCALE GENOMIC DNA]</scope>
    <source>
        <strain>ATCC 204508 / S288c</strain>
    </source>
</reference>
<reference key="2">
    <citation type="journal article" date="2014" name="G3 (Bethesda)">
        <title>The reference genome sequence of Saccharomyces cerevisiae: Then and now.</title>
        <authorList>
            <person name="Engel S.R."/>
            <person name="Dietrich F.S."/>
            <person name="Fisk D.G."/>
            <person name="Binkley G."/>
            <person name="Balakrishnan R."/>
            <person name="Costanzo M.C."/>
            <person name="Dwight S.S."/>
            <person name="Hitz B.C."/>
            <person name="Karra K."/>
            <person name="Nash R.S."/>
            <person name="Weng S."/>
            <person name="Wong E.D."/>
            <person name="Lloyd P."/>
            <person name="Skrzypek M.S."/>
            <person name="Miyasato S.R."/>
            <person name="Simison M."/>
            <person name="Cherry J.M."/>
        </authorList>
    </citation>
    <scope>GENOME REANNOTATION</scope>
    <source>
        <strain>ATCC 204508 / S288c</strain>
    </source>
</reference>
<reference key="3">
    <citation type="journal article" date="2002" name="Genome Res.">
        <title>Parallel identification of new genes in Saccharomyces cerevisiae.</title>
        <authorList>
            <person name="Oshiro G."/>
            <person name="Wodicka L.M."/>
            <person name="Washburn M.P."/>
            <person name="Yates J.R. III"/>
            <person name="Lockhart D.J."/>
            <person name="Winzeler E.A."/>
        </authorList>
    </citation>
    <scope>IDENTIFICATION BY MASS SPECTROMETRY</scope>
</reference>
<proteinExistence type="evidence at protein level"/>
<organism>
    <name type="scientific">Saccharomyces cerevisiae (strain ATCC 204508 / S288c)</name>
    <name type="common">Baker's yeast</name>
    <dbReference type="NCBI Taxonomy" id="559292"/>
    <lineage>
        <taxon>Eukaryota</taxon>
        <taxon>Fungi</taxon>
        <taxon>Dikarya</taxon>
        <taxon>Ascomycota</taxon>
        <taxon>Saccharomycotina</taxon>
        <taxon>Saccharomycetes</taxon>
        <taxon>Saccharomycetales</taxon>
        <taxon>Saccharomycetaceae</taxon>
        <taxon>Saccharomyces</taxon>
    </lineage>
</organism>
<feature type="chain" id="PRO_0000247799" description="Uncharacterized protein YNL146C-A">
    <location>
        <begin position="1"/>
        <end position="64"/>
    </location>
</feature>
<gene>
    <name type="ordered locus">YNL146C-A</name>
</gene>